<protein>
    <recommendedName>
        <fullName evidence="1">Hemagglutinin</fullName>
    </recommendedName>
    <component>
        <recommendedName>
            <fullName evidence="1">Hemagglutinin HA1 chain</fullName>
        </recommendedName>
    </component>
    <component>
        <recommendedName>
            <fullName evidence="1">Hemagglutinin HA2 chain</fullName>
        </recommendedName>
    </component>
</protein>
<dbReference type="EMBL" id="CY009348">
    <property type="protein sequence ID" value="ABE12532.1"/>
    <property type="molecule type" value="Genomic_RNA"/>
</dbReference>
<dbReference type="EMBL" id="AF092062">
    <property type="protein sequence ID" value="AAC78096.1"/>
    <property type="molecule type" value="Genomic_RNA"/>
</dbReference>
<dbReference type="PDB" id="4WE5">
    <property type="method" value="X-ray"/>
    <property type="resolution" value="2.10 A"/>
    <property type="chains" value="A=18-345, B=346-519"/>
</dbReference>
<dbReference type="PDBsum" id="4WE5"/>
<dbReference type="SMR" id="Q1PUD9"/>
<dbReference type="GlyCosmos" id="Q1PUD9">
    <property type="glycosylation" value="8 sites, No reported glycans"/>
</dbReference>
<dbReference type="Proteomes" id="UP000133870">
    <property type="component" value="Genome"/>
</dbReference>
<dbReference type="GO" id="GO:0020002">
    <property type="term" value="C:host cell plasma membrane"/>
    <property type="evidence" value="ECO:0007669"/>
    <property type="project" value="UniProtKB-SubCell"/>
</dbReference>
<dbReference type="GO" id="GO:0016020">
    <property type="term" value="C:membrane"/>
    <property type="evidence" value="ECO:0007669"/>
    <property type="project" value="UniProtKB-UniRule"/>
</dbReference>
<dbReference type="GO" id="GO:0019031">
    <property type="term" value="C:viral envelope"/>
    <property type="evidence" value="ECO:0007669"/>
    <property type="project" value="UniProtKB-UniRule"/>
</dbReference>
<dbReference type="GO" id="GO:0055036">
    <property type="term" value="C:virion membrane"/>
    <property type="evidence" value="ECO:0007669"/>
    <property type="project" value="UniProtKB-SubCell"/>
</dbReference>
<dbReference type="GO" id="GO:0046789">
    <property type="term" value="F:host cell surface receptor binding"/>
    <property type="evidence" value="ECO:0007669"/>
    <property type="project" value="UniProtKB-UniRule"/>
</dbReference>
<dbReference type="GO" id="GO:0075512">
    <property type="term" value="P:clathrin-dependent endocytosis of virus by host cell"/>
    <property type="evidence" value="ECO:0007669"/>
    <property type="project" value="UniProtKB-UniRule"/>
</dbReference>
<dbReference type="GO" id="GO:0039654">
    <property type="term" value="P:fusion of virus membrane with host endosome membrane"/>
    <property type="evidence" value="ECO:0007669"/>
    <property type="project" value="UniProtKB-UniRule"/>
</dbReference>
<dbReference type="GO" id="GO:0019064">
    <property type="term" value="P:fusion of virus membrane with host plasma membrane"/>
    <property type="evidence" value="ECO:0007669"/>
    <property type="project" value="InterPro"/>
</dbReference>
<dbReference type="GO" id="GO:0046761">
    <property type="term" value="P:viral budding from plasma membrane"/>
    <property type="evidence" value="ECO:0007669"/>
    <property type="project" value="UniProtKB-UniRule"/>
</dbReference>
<dbReference type="GO" id="GO:0019062">
    <property type="term" value="P:virion attachment to host cell"/>
    <property type="evidence" value="ECO:0007669"/>
    <property type="project" value="UniProtKB-KW"/>
</dbReference>
<dbReference type="FunFam" id="3.90.20.10:FF:000001">
    <property type="entry name" value="Hemagglutinin"/>
    <property type="match status" value="1"/>
</dbReference>
<dbReference type="FunFam" id="3.90.209.20:FF:000001">
    <property type="entry name" value="Hemagglutinin"/>
    <property type="match status" value="1"/>
</dbReference>
<dbReference type="Gene3D" id="3.90.20.10">
    <property type="match status" value="1"/>
</dbReference>
<dbReference type="Gene3D" id="3.90.209.20">
    <property type="match status" value="1"/>
</dbReference>
<dbReference type="HAMAP" id="MF_04072">
    <property type="entry name" value="INFV_HEMA"/>
    <property type="match status" value="1"/>
</dbReference>
<dbReference type="InterPro" id="IPR008980">
    <property type="entry name" value="Capsid_hemagglutn"/>
</dbReference>
<dbReference type="InterPro" id="IPR013828">
    <property type="entry name" value="Hemagglutn_HA1_a/b_dom_sf"/>
</dbReference>
<dbReference type="InterPro" id="IPR000149">
    <property type="entry name" value="Hemagglutn_influenz_A"/>
</dbReference>
<dbReference type="InterPro" id="IPR001364">
    <property type="entry name" value="Hemagglutn_influenz_A/B"/>
</dbReference>
<dbReference type="Pfam" id="PF00509">
    <property type="entry name" value="Hemagglutinin"/>
    <property type="match status" value="1"/>
</dbReference>
<dbReference type="PRINTS" id="PR00330">
    <property type="entry name" value="HEMAGGLUTN1"/>
</dbReference>
<dbReference type="PRINTS" id="PR00329">
    <property type="entry name" value="HEMAGGLUTN12"/>
</dbReference>
<dbReference type="SUPFAM" id="SSF58064">
    <property type="entry name" value="Influenza hemagglutinin (stalk)"/>
    <property type="match status" value="1"/>
</dbReference>
<dbReference type="SUPFAM" id="SSF49818">
    <property type="entry name" value="Viral protein domain"/>
    <property type="match status" value="1"/>
</dbReference>
<feature type="signal peptide" evidence="1">
    <location>
        <begin position="1"/>
        <end position="16"/>
    </location>
</feature>
<feature type="chain" id="PRO_0000440436" description="Hemagglutinin" evidence="1">
    <location>
        <begin position="17"/>
        <end position="566"/>
    </location>
</feature>
<feature type="chain" id="PRO_5000136893" description="Hemagglutinin HA1 chain">
    <location>
        <begin position="17"/>
        <end position="344"/>
    </location>
</feature>
<feature type="chain" id="PRO_5000136894" description="Hemagglutinin HA2 chain" evidence="1">
    <location>
        <begin position="346"/>
        <end position="566"/>
    </location>
</feature>
<feature type="topological domain" description="Extracellular" evidence="1">
    <location>
        <begin position="17"/>
        <end position="530"/>
    </location>
</feature>
<feature type="transmembrane region" description="Helical" evidence="1">
    <location>
        <begin position="531"/>
        <end position="551"/>
    </location>
</feature>
<feature type="topological domain" description="Cytoplasmic" evidence="1">
    <location>
        <begin position="552"/>
        <end position="566"/>
    </location>
</feature>
<feature type="site" description="Cleavage; by host" evidence="1">
    <location>
        <begin position="345"/>
        <end position="346"/>
    </location>
</feature>
<feature type="lipid moiety-binding region" description="S-palmitoyl cysteine; by host" evidence="1">
    <location>
        <position position="555"/>
    </location>
</feature>
<feature type="lipid moiety-binding region" description="S-palmitoyl cysteine; by host" evidence="1">
    <location>
        <position position="562"/>
    </location>
</feature>
<feature type="lipid moiety-binding region" description="S-palmitoyl cysteine; by host" evidence="1">
    <location>
        <position position="565"/>
    </location>
</feature>
<feature type="glycosylation site" description="N-linked (GlcNAc...) asparagine; by host" evidence="1">
    <location>
        <position position="24"/>
    </location>
</feature>
<feature type="glycosylation site" description="N-linked (GlcNAc...) asparagine; by host" evidence="1">
    <location>
        <position position="38"/>
    </location>
</feature>
<feature type="glycosylation site" description="N-linked (GlcNAc...) asparagine; by host" evidence="1">
    <location>
        <position position="54"/>
    </location>
</feature>
<feature type="glycosylation site" description="N-linked (GlcNAc...) asparagine; by host" evidence="1">
    <location>
        <position position="79"/>
    </location>
</feature>
<feature type="glycosylation site" description="N-linked (GlcNAc...) asparagine; by host" evidence="1">
    <location>
        <position position="97"/>
    </location>
</feature>
<feature type="glycosylation site" description="N-linked (GlcNAc...) asparagine; by host" evidence="1">
    <location>
        <position position="181"/>
    </location>
</feature>
<feature type="glycosylation site" description="N-linked (GlcNAc...) asparagine; by host" evidence="1">
    <location>
        <position position="301"/>
    </location>
</feature>
<feature type="glycosylation site" description="N-linked (GlcNAc...) asparagine; by host" evidence="1">
    <location>
        <position position="499"/>
    </location>
</feature>
<feature type="disulfide bond" description="Interchain (between HA1 and HA2 chains)" evidence="1">
    <location>
        <begin position="30"/>
        <end position="482"/>
    </location>
</feature>
<feature type="disulfide bond" evidence="1">
    <location>
        <begin position="68"/>
        <end position="293"/>
    </location>
</feature>
<feature type="disulfide bond" evidence="1">
    <location>
        <begin position="80"/>
        <end position="92"/>
    </location>
</feature>
<feature type="disulfide bond" evidence="1">
    <location>
        <begin position="113"/>
        <end position="155"/>
    </location>
</feature>
<feature type="disulfide bond" evidence="1">
    <location>
        <begin position="297"/>
        <end position="321"/>
    </location>
</feature>
<feature type="disulfide bond" evidence="1">
    <location>
        <begin position="489"/>
        <end position="493"/>
    </location>
</feature>
<feature type="strand" evidence="3">
    <location>
        <begin position="27"/>
        <end position="34"/>
    </location>
</feature>
<feature type="strand" evidence="3">
    <location>
        <begin position="40"/>
        <end position="42"/>
    </location>
</feature>
<feature type="strand" evidence="3">
    <location>
        <begin position="48"/>
        <end position="53"/>
    </location>
</feature>
<feature type="strand" evidence="3">
    <location>
        <begin position="55"/>
        <end position="57"/>
    </location>
</feature>
<feature type="strand" evidence="3">
    <location>
        <begin position="65"/>
        <end position="72"/>
    </location>
</feature>
<feature type="strand" evidence="3">
    <location>
        <begin position="74"/>
        <end position="76"/>
    </location>
</feature>
<feature type="helix" evidence="3">
    <location>
        <begin position="82"/>
        <end position="87"/>
    </location>
</feature>
<feature type="helix" evidence="3">
    <location>
        <begin position="90"/>
        <end position="95"/>
    </location>
</feature>
<feature type="strand" evidence="3">
    <location>
        <begin position="101"/>
        <end position="105"/>
    </location>
</feature>
<feature type="helix" evidence="3">
    <location>
        <begin position="121"/>
        <end position="131"/>
    </location>
</feature>
<feature type="strand" evidence="3">
    <location>
        <begin position="136"/>
        <end position="138"/>
    </location>
</feature>
<feature type="helix" evidence="3">
    <location>
        <begin position="153"/>
        <end position="155"/>
    </location>
</feature>
<feature type="strand" evidence="3">
    <location>
        <begin position="157"/>
        <end position="160"/>
    </location>
</feature>
<feature type="strand" evidence="3">
    <location>
        <begin position="167"/>
        <end position="169"/>
    </location>
</feature>
<feature type="strand" evidence="3">
    <location>
        <begin position="171"/>
        <end position="173"/>
    </location>
</feature>
<feature type="strand" evidence="3">
    <location>
        <begin position="180"/>
        <end position="185"/>
    </location>
</feature>
<feature type="strand" evidence="3">
    <location>
        <begin position="188"/>
        <end position="190"/>
    </location>
</feature>
<feature type="strand" evidence="3">
    <location>
        <begin position="192"/>
        <end position="200"/>
    </location>
</feature>
<feature type="helix" evidence="3">
    <location>
        <begin position="204"/>
        <end position="211"/>
    </location>
</feature>
<feature type="strand" evidence="3">
    <location>
        <begin position="212"/>
        <end position="215"/>
    </location>
</feature>
<feature type="strand" evidence="3">
    <location>
        <begin position="217"/>
        <end position="221"/>
    </location>
</feature>
<feature type="strand" evidence="3">
    <location>
        <begin position="226"/>
        <end position="229"/>
    </location>
</feature>
<feature type="strand" evidence="3">
    <location>
        <begin position="245"/>
        <end position="253"/>
    </location>
</feature>
<feature type="strand" evidence="3">
    <location>
        <begin position="258"/>
        <end position="265"/>
    </location>
</feature>
<feature type="strand" evidence="3">
    <location>
        <begin position="267"/>
        <end position="275"/>
    </location>
</feature>
<feature type="strand" evidence="3">
    <location>
        <begin position="282"/>
        <end position="285"/>
    </location>
</feature>
<feature type="strand" evidence="3">
    <location>
        <begin position="290"/>
        <end position="294"/>
    </location>
</feature>
<feature type="strand" evidence="3">
    <location>
        <begin position="296"/>
        <end position="299"/>
    </location>
</feature>
<feature type="strand" evidence="3">
    <location>
        <begin position="302"/>
        <end position="304"/>
    </location>
</feature>
<feature type="strand" evidence="3">
    <location>
        <begin position="307"/>
        <end position="311"/>
    </location>
</feature>
<feature type="strand" evidence="3">
    <location>
        <begin position="318"/>
        <end position="321"/>
    </location>
</feature>
<feature type="strand" evidence="3">
    <location>
        <begin position="331"/>
        <end position="333"/>
    </location>
</feature>
<feature type="strand" evidence="3">
    <location>
        <begin position="366"/>
        <end position="373"/>
    </location>
</feature>
<feature type="strand" evidence="3">
    <location>
        <begin position="376"/>
        <end position="381"/>
    </location>
</feature>
<feature type="helix" evidence="3">
    <location>
        <begin position="383"/>
        <end position="399"/>
    </location>
</feature>
<feature type="strand" evidence="3">
    <location>
        <begin position="405"/>
        <end position="407"/>
    </location>
</feature>
<feature type="helix" evidence="3">
    <location>
        <begin position="421"/>
        <end position="471"/>
    </location>
</feature>
<feature type="helix" evidence="3">
    <location>
        <begin position="472"/>
        <end position="474"/>
    </location>
</feature>
<feature type="strand" evidence="3">
    <location>
        <begin position="475"/>
        <end position="477"/>
    </location>
</feature>
<feature type="strand" evidence="3">
    <location>
        <begin position="479"/>
        <end position="485"/>
    </location>
</feature>
<feature type="helix" evidence="3">
    <location>
        <begin position="491"/>
        <end position="498"/>
    </location>
</feature>
<feature type="helix" evidence="3">
    <location>
        <begin position="504"/>
        <end position="515"/>
    </location>
</feature>
<reference key="1">
    <citation type="submission" date="2006-04" db="EMBL/GenBank/DDBJ databases">
        <title>The NIAID influenza genome sequencing project.</title>
        <authorList>
            <person name="Spiro D."/>
            <person name="Ghedin E."/>
            <person name="Sengamalay N."/>
            <person name="Halpin R."/>
            <person name="Boyne A."/>
            <person name="Zaborsky J."/>
            <person name="Feldblyum T."/>
            <person name="Subbu V."/>
            <person name="Sparenborg J."/>
            <person name="Shumway M."/>
            <person name="Sitz J."/>
            <person name="Katzel D."/>
            <person name="Koo H."/>
            <person name="Salzberg S.L."/>
            <person name="Griesemer S."/>
            <person name="St George K."/>
            <person name="Bennett R."/>
            <person name="Taylor J."/>
            <person name="Bennink J.R."/>
            <person name="Yewdell J.W."/>
            <person name="Bao Y."/>
            <person name="Bolotov P."/>
            <person name="Dernovoy D."/>
            <person name="Kiryutin B."/>
            <person name="Lipman D.J."/>
            <person name="Tatusova T."/>
        </authorList>
    </citation>
    <scope>NUCLEOTIDE SEQUENCE [GENOMIC RNA]</scope>
</reference>
<reference key="2">
    <citation type="journal article" date="1999" name="Vaccine">
        <title>Antigenic drift in swine influenza H3 haemagglutinins with implications for vaccination policy.</title>
        <authorList>
            <person name="de Jong J.C."/>
            <person name="van Nieuwstadt A.P."/>
            <person name="Kimman T.G."/>
            <person name="Loeffen W.L.A."/>
            <person name="Bestebroer T.M."/>
            <person name="Bijlsma K."/>
            <person name="Verweij C."/>
            <person name="Osterhaus A.M.E."/>
            <person name="Class E.C.J."/>
        </authorList>
    </citation>
    <scope>NUCLEOTIDE SEQUENCE [GENOMIC RNA] OF 17-345</scope>
</reference>
<gene>
    <name evidence="1" type="primary">HA</name>
</gene>
<name>HEMA_I73A5</name>
<sequence length="566" mass="63365">MKTIIALSYIFCLVLGQDFPGNDNSTATLCLGHHAVPNGTLVKTITNDQIEVTNATELVQSSSTGKICNNPHRILDGINCTLIDALLGDPHCDGFQNETWDLFVERSKAFSNCYPYDVPDYASLRSLVASSGTLEFINEGFTWTGVTQNGGSNACKRGPDSGFFSRLNWLYKSGSAYPVLNVTMPNNDNFDKLYIWGVHHPSTDQEQTNLYVQASGRVTVSTKRSQQTIIPNIGSRPWVRGLSSRISIYWTIVKPGDILVINSNGNLIAPRGYFKMRTGKSSIMRSDAPIGTCISECITPNGSIPNDKPFQNVNKITYGACPKYVKQNTLKLATGMRNVPEKQTRGIFGAIAGFIENGWEGMIDGWYGFRHQNSEGTGQAADLKSTQAAIDQINGKLNRVIEKTNEKFHQIEKEFSEVEGRIQDLEKYVEDTKIDLWSYNAELLVALENQHTIDLTDSEMNKLFEKTRRQLRENAEDMGNGCFKIYHKCDNACIGSIRNGTYDHDVYRDEALNNRFQIKGVELKSGYKDWILWISFAISCFLLCVVLLGFIMWACQKGNIRCNICI</sequence>
<keyword id="KW-0002">3D-structure</keyword>
<keyword id="KW-1167">Clathrin- and caveolin-independent endocytosis of virus by host</keyword>
<keyword id="KW-1165">Clathrin-mediated endocytosis of virus by host</keyword>
<keyword id="KW-1015">Disulfide bond</keyword>
<keyword id="KW-1170">Fusion of virus membrane with host endosomal membrane</keyword>
<keyword id="KW-1168">Fusion of virus membrane with host membrane</keyword>
<keyword id="KW-0325">Glycoprotein</keyword>
<keyword id="KW-0348">Hemagglutinin</keyword>
<keyword id="KW-1032">Host cell membrane</keyword>
<keyword id="KW-1043">Host membrane</keyword>
<keyword id="KW-0945">Host-virus interaction</keyword>
<keyword id="KW-0449">Lipoprotein</keyword>
<keyword id="KW-0472">Membrane</keyword>
<keyword id="KW-0564">Palmitate</keyword>
<keyword id="KW-0732">Signal</keyword>
<keyword id="KW-0812">Transmembrane</keyword>
<keyword id="KW-1133">Transmembrane helix</keyword>
<keyword id="KW-1161">Viral attachment to host cell</keyword>
<keyword id="KW-0261">Viral envelope protein</keyword>
<keyword id="KW-1162">Viral penetration into host cytoplasm</keyword>
<keyword id="KW-0946">Virion</keyword>
<keyword id="KW-1164">Virus endocytosis by host</keyword>
<keyword id="KW-1160">Virus entry into host cell</keyword>
<comment type="function">
    <text evidence="1">Binds to sialic acid-containing receptors on the cell surface, bringing about the attachment of the virus particle to the cell. This attachment induces virion internalization either through clathrin-dependent endocytosis or through clathrin- and caveolin-independent pathway. Plays a major role in the determination of host range restriction and virulence. Class I viral fusion protein. Responsible for penetration of the virus into the cell cytoplasm by mediating the fusion of the membrane of the endocytosed virus particle with the endosomal membrane. Low pH in endosomes induces an irreversible conformational change in HA2, releasing the fusion hydrophobic peptide. Several trimers are required to form a competent fusion pore.</text>
</comment>
<comment type="subunit">
    <text evidence="1">Homotrimer of disulfide-linked HA1-HA2.</text>
</comment>
<comment type="subcellular location">
    <subcellularLocation>
        <location evidence="1">Virion membrane</location>
        <topology evidence="1">Single-pass type I membrane protein</topology>
    </subcellularLocation>
    <subcellularLocation>
        <location evidence="1">Host apical cell membrane</location>
        <topology evidence="1">Single-pass type I membrane protein</topology>
    </subcellularLocation>
    <text evidence="1">Targeted to the apical plasma membrane in epithelial polarized cells through a signal present in the transmembrane domain. Associated with glycosphingolipid- and cholesterol-enriched detergent-resistant lipid rafts.</text>
</comment>
<comment type="PTM">
    <text evidence="1">Palmitoylated.</text>
</comment>
<comment type="PTM">
    <text evidence="1">In natural infection, inactive HA is matured into HA1 and HA2 outside the cell by one or more trypsin-like, arginine-specific endoprotease secreted by the bronchial epithelial cells. One identified protease that may be involved in this process is secreted in lungs by club cells.</text>
</comment>
<comment type="miscellaneous">
    <text>Major glycoprotein, comprises over 80% of the envelope proteins present in virus particle.</text>
</comment>
<comment type="miscellaneous">
    <text>The extent of infection into host organism is determined by HA. Influenza viruses bud from the apical surface of polarized epithelial cells (e.g. bronchial epithelial cells) into lumen of lungs and are therefore usually pneumotropic. The reason is that HA is cleaved by tryptase clara which is restricted to lungs. However, HAs of H5 and H7 pantropic avian viruses subtypes can be cleaved by furin and subtilisin-type enzymes, allowing the virus to grow in other organs than lungs.</text>
</comment>
<comment type="miscellaneous">
    <text evidence="2">The influenza A genome consist of 8 RNA segments. Genetic variation of hemagglutinin and/or neuraminidase genes results in the emergence of new influenza strains. The mechanism of variation can be the result of point mutations or the result of genetic reassortment between segments of two different strains.</text>
</comment>
<comment type="similarity">
    <text evidence="1">Belongs to the influenza viruses hemagglutinin family.</text>
</comment>
<organism>
    <name type="scientific">Influenza A virus (strain A/Port Chalmers/1/1973 H3N2)</name>
    <dbReference type="NCBI Taxonomy" id="385624"/>
    <lineage>
        <taxon>Viruses</taxon>
        <taxon>Riboviria</taxon>
        <taxon>Orthornavirae</taxon>
        <taxon>Negarnaviricota</taxon>
        <taxon>Polyploviricotina</taxon>
        <taxon>Insthoviricetes</taxon>
        <taxon>Articulavirales</taxon>
        <taxon>Orthomyxoviridae</taxon>
        <taxon>Alphainfluenzavirus</taxon>
        <taxon>Alphainfluenzavirus influenzae</taxon>
        <taxon>Influenza A virus</taxon>
    </lineage>
</organism>
<accession>Q1PUD9</accession>
<accession>Q9YS46</accession>
<organismHost>
    <name type="scientific">Aves</name>
    <dbReference type="NCBI Taxonomy" id="8782"/>
</organismHost>
<organismHost>
    <name type="scientific">Cetacea</name>
    <name type="common">whales</name>
    <dbReference type="NCBI Taxonomy" id="9721"/>
</organismHost>
<organismHost>
    <name type="scientific">Homo sapiens</name>
    <name type="common">Human</name>
    <dbReference type="NCBI Taxonomy" id="9606"/>
</organismHost>
<organismHost>
    <name type="scientific">Phocidae</name>
    <name type="common">true seals</name>
    <dbReference type="NCBI Taxonomy" id="9709"/>
</organismHost>
<organismHost>
    <name type="scientific">Sus scrofa</name>
    <name type="common">Pig</name>
    <dbReference type="NCBI Taxonomy" id="9823"/>
</organismHost>
<evidence type="ECO:0000255" key="1">
    <source>
        <dbReference type="HAMAP-Rule" id="MF_04072"/>
    </source>
</evidence>
<evidence type="ECO:0000305" key="2"/>
<evidence type="ECO:0007829" key="3">
    <source>
        <dbReference type="PDB" id="4WE5"/>
    </source>
</evidence>
<proteinExistence type="evidence at protein level"/>